<sequence>MQSASSLQQQQPQQQQQQQPQQQGQQQGQQAQQQQGQQQQPASQTVQSVPVQANLQHAAAAAAAVAPPGVQQVAPNSPSAPGSLECQWQGCQELCPTPEALYEHVCERHVGRKSTNNLNLTCGWSNCRTTTVKRDHITSHIRVHVPLKPHKCDFCGKAFKRPQDLKKHVKTHADDSVLMRSPEPGAGQRQQPPAGMFGVGLGPDGKRSLGPVPQAYGHPPPQYYQPQHPQQQPNPSYGNVYYAVGHDAAHQASYESKKRGYDALNEFFGDLKRRQFDPTSYAAVGQRLLNLHGLPLPLTHAGAVPEYQPMPAMVGVGGGHGGYQSAGPIPTQSYHLPPMGNLRTKADLMNIDQFLEQMQSTVYESDENVAAAGVAQPGAHYVQGPLSYRTTNSPPTHHQSHHQHPHATATAAATTTAATTASMMSTSAAATPASSISAASRSPHASTPALTPPSSAQSYTSGRSPISLASSHGMSPSHHPSTAGMYPTLPATTGQDSLSSSGYPTTVSSAAPPSTLSSVFDDDRRRYTGGMLQRSRPDIDLSTPSIKRDDADATAGKDEPKLSSSVIDPALSRASVDMDEDAAPHRSPSSTPTPTATTAAAGPDDRQPAGEQQWVENVRLLQRLRDYVLERLNNGDYVDEDKQDDSDKEEDAKSDKASPESASASDAATGAGEYPSIKMHGMEAIAAAAVAHEEGRDDQMPRDDEDQENPSTPTARSTTTMLDAEEEAKQAGENLYPVLKMAVDDDGADTDGDEKMGQ</sequence>
<proteinExistence type="inferred from homology"/>
<gene>
    <name type="primary">pacC</name>
</gene>
<comment type="function">
    <text evidence="1">Transcription factor that mediates regulation of both acid- and alkaline-expressed genes in response to ambient pH. At alkaline ambient pH, activates transcription of alkaline-expressed genes (including pacC itself) and represses transcription of acid-expressed genes (By similarity).</text>
</comment>
<comment type="subcellular location">
    <subcellularLocation>
        <location evidence="1">Cytoplasm</location>
    </subcellularLocation>
    <subcellularLocation>
        <location evidence="1">Nucleus</location>
    </subcellularLocation>
</comment>
<comment type="PTM">
    <text evidence="1">Activated by C-terminal proteolytic cleavage by signaling protease (probably palB/RIM13) at neutral to alkaline ambient pH.</text>
</comment>
<comment type="similarity">
    <text evidence="4">Belongs to the pacC/RIM101 family.</text>
</comment>
<accession>Q9C1A4</accession>
<keyword id="KW-0010">Activator</keyword>
<keyword id="KW-0963">Cytoplasm</keyword>
<keyword id="KW-0238">DNA-binding</keyword>
<keyword id="KW-0479">Metal-binding</keyword>
<keyword id="KW-0539">Nucleus</keyword>
<keyword id="KW-0677">Repeat</keyword>
<keyword id="KW-0678">Repressor</keyword>
<keyword id="KW-0804">Transcription</keyword>
<keyword id="KW-0805">Transcription regulation</keyword>
<keyword id="KW-0862">Zinc</keyword>
<keyword id="KW-0863">Zinc-finger</keyword>
<dbReference type="EMBL" id="AF363788">
    <property type="protein sequence ID" value="AAK35072.2"/>
    <property type="molecule type" value="Genomic_DNA"/>
</dbReference>
<dbReference type="VEuPathDB" id="FungiDB:TERG_00838"/>
<dbReference type="GO" id="GO:0005737">
    <property type="term" value="C:cytoplasm"/>
    <property type="evidence" value="ECO:0007669"/>
    <property type="project" value="UniProtKB-SubCell"/>
</dbReference>
<dbReference type="GO" id="GO:0005634">
    <property type="term" value="C:nucleus"/>
    <property type="evidence" value="ECO:0007669"/>
    <property type="project" value="UniProtKB-SubCell"/>
</dbReference>
<dbReference type="GO" id="GO:0003677">
    <property type="term" value="F:DNA binding"/>
    <property type="evidence" value="ECO:0007669"/>
    <property type="project" value="UniProtKB-KW"/>
</dbReference>
<dbReference type="GO" id="GO:0008270">
    <property type="term" value="F:zinc ion binding"/>
    <property type="evidence" value="ECO:0007669"/>
    <property type="project" value="UniProtKB-KW"/>
</dbReference>
<dbReference type="GO" id="GO:0045944">
    <property type="term" value="P:positive regulation of transcription by RNA polymerase II"/>
    <property type="evidence" value="ECO:0007669"/>
    <property type="project" value="TreeGrafter"/>
</dbReference>
<dbReference type="FunFam" id="3.30.160.60:FF:000458">
    <property type="entry name" value="pH-response transcription factor pacC/RIM101"/>
    <property type="match status" value="1"/>
</dbReference>
<dbReference type="FunFam" id="3.30.160.60:FF:001875">
    <property type="entry name" value="pH-response transcription factor pacC/RIM101"/>
    <property type="match status" value="1"/>
</dbReference>
<dbReference type="Gene3D" id="3.30.160.60">
    <property type="entry name" value="Classic Zinc Finger"/>
    <property type="match status" value="2"/>
</dbReference>
<dbReference type="InterPro" id="IPR050806">
    <property type="entry name" value="pacC/RIM101"/>
</dbReference>
<dbReference type="InterPro" id="IPR036236">
    <property type="entry name" value="Znf_C2H2_sf"/>
</dbReference>
<dbReference type="InterPro" id="IPR013087">
    <property type="entry name" value="Znf_C2H2_type"/>
</dbReference>
<dbReference type="PANTHER" id="PTHR47257">
    <property type="entry name" value="PH-RESPONSE TRANSCRIPTION FACTOR PACC/RIM101"/>
    <property type="match status" value="1"/>
</dbReference>
<dbReference type="PANTHER" id="PTHR47257:SF1">
    <property type="entry name" value="PH-RESPONSE TRANSCRIPTION FACTOR PACC_RIM101"/>
    <property type="match status" value="1"/>
</dbReference>
<dbReference type="SMART" id="SM00355">
    <property type="entry name" value="ZnF_C2H2"/>
    <property type="match status" value="3"/>
</dbReference>
<dbReference type="SUPFAM" id="SSF57667">
    <property type="entry name" value="beta-beta-alpha zinc fingers"/>
    <property type="match status" value="1"/>
</dbReference>
<dbReference type="PROSITE" id="PS00028">
    <property type="entry name" value="ZINC_FINGER_C2H2_1"/>
    <property type="match status" value="2"/>
</dbReference>
<dbReference type="PROSITE" id="PS50157">
    <property type="entry name" value="ZINC_FINGER_C2H2_2"/>
    <property type="match status" value="2"/>
</dbReference>
<name>PACC_TRIRU</name>
<reference key="1">
    <citation type="submission" date="2001-03" db="EMBL/GenBank/DDBJ databases">
        <title>Cloning of a zinc (Zn)-finger transcription factor pacC gene from the dermatophyte Trichophyton rubrum.</title>
        <authorList>
            <person name="Ferreira-Nozawa M.S."/>
            <person name="Nozawa S.R."/>
            <person name="Rossi A."/>
            <person name="Fachin A.L."/>
            <person name="Maccheroni W. Jr."/>
            <person name="Martinez-Rossi N.M."/>
        </authorList>
    </citation>
    <scope>NUCLEOTIDE SEQUENCE [GENOMIC DNA]</scope>
</reference>
<evidence type="ECO:0000250" key="1"/>
<evidence type="ECO:0000255" key="2">
    <source>
        <dbReference type="PROSITE-ProRule" id="PRU00042"/>
    </source>
</evidence>
<evidence type="ECO:0000256" key="3">
    <source>
        <dbReference type="SAM" id="MobiDB-lite"/>
    </source>
</evidence>
<evidence type="ECO:0000305" key="4"/>
<organism>
    <name type="scientific">Trichophyton rubrum</name>
    <name type="common">Athlete's foot fungus</name>
    <name type="synonym">Epidermophyton rubrum</name>
    <dbReference type="NCBI Taxonomy" id="5551"/>
    <lineage>
        <taxon>Eukaryota</taxon>
        <taxon>Fungi</taxon>
        <taxon>Dikarya</taxon>
        <taxon>Ascomycota</taxon>
        <taxon>Pezizomycotina</taxon>
        <taxon>Eurotiomycetes</taxon>
        <taxon>Eurotiomycetidae</taxon>
        <taxon>Onygenales</taxon>
        <taxon>Arthrodermataceae</taxon>
        <taxon>Trichophyton</taxon>
    </lineage>
</organism>
<feature type="chain" id="PRO_0000046844" description="pH-response transcription factor pacC/RIM101">
    <location>
        <begin position="1"/>
        <end position="758"/>
    </location>
</feature>
<feature type="zinc finger region" description="C2H2-type 1" evidence="2">
    <location>
        <begin position="84"/>
        <end position="109"/>
    </location>
</feature>
<feature type="zinc finger region" description="C2H2-type 2" evidence="2">
    <location>
        <begin position="120"/>
        <end position="144"/>
    </location>
</feature>
<feature type="zinc finger region" description="C2H2-type 3" evidence="2">
    <location>
        <begin position="150"/>
        <end position="172"/>
    </location>
</feature>
<feature type="region of interest" description="Disordered" evidence="3">
    <location>
        <begin position="1"/>
        <end position="48"/>
    </location>
</feature>
<feature type="region of interest" description="Disordered" evidence="3">
    <location>
        <begin position="177"/>
        <end position="235"/>
    </location>
</feature>
<feature type="region of interest" description="Disordered" evidence="3">
    <location>
        <begin position="383"/>
        <end position="612"/>
    </location>
</feature>
<feature type="region of interest" description="Disordered" evidence="3">
    <location>
        <begin position="635"/>
        <end position="737"/>
    </location>
</feature>
<feature type="short sequence motif" description="YPX[LI] motif 1">
    <location>
        <begin position="486"/>
        <end position="489"/>
    </location>
</feature>
<feature type="short sequence motif" description="YPX[LI] motif 2">
    <location>
        <begin position="736"/>
        <end position="739"/>
    </location>
</feature>
<feature type="compositionally biased region" description="Low complexity" evidence="3">
    <location>
        <begin position="224"/>
        <end position="233"/>
    </location>
</feature>
<feature type="compositionally biased region" description="Low complexity" evidence="3">
    <location>
        <begin position="406"/>
        <end position="446"/>
    </location>
</feature>
<feature type="compositionally biased region" description="Polar residues" evidence="3">
    <location>
        <begin position="448"/>
        <end position="469"/>
    </location>
</feature>
<feature type="compositionally biased region" description="Low complexity" evidence="3">
    <location>
        <begin position="470"/>
        <end position="481"/>
    </location>
</feature>
<feature type="compositionally biased region" description="Polar residues" evidence="3">
    <location>
        <begin position="490"/>
        <end position="518"/>
    </location>
</feature>
<feature type="compositionally biased region" description="Basic and acidic residues" evidence="3">
    <location>
        <begin position="546"/>
        <end position="561"/>
    </location>
</feature>
<feature type="compositionally biased region" description="Low complexity" evidence="3">
    <location>
        <begin position="585"/>
        <end position="602"/>
    </location>
</feature>
<feature type="compositionally biased region" description="Acidic residues" evidence="3">
    <location>
        <begin position="637"/>
        <end position="649"/>
    </location>
</feature>
<feature type="compositionally biased region" description="Low complexity" evidence="3">
    <location>
        <begin position="659"/>
        <end position="668"/>
    </location>
</feature>
<feature type="compositionally biased region" description="Basic and acidic residues" evidence="3">
    <location>
        <begin position="691"/>
        <end position="702"/>
    </location>
</feature>
<feature type="compositionally biased region" description="Polar residues" evidence="3">
    <location>
        <begin position="709"/>
        <end position="721"/>
    </location>
</feature>
<protein>
    <recommendedName>
        <fullName>pH-response transcription factor pacC/RIM101</fullName>
    </recommendedName>
</protein>